<proteinExistence type="inferred from homology"/>
<sequence length="166" mass="17937">MSRTLSKPAGGSLAPWLGVAVIVILFDQLTKIAVAKVFAYGSSHAIAPFFNLVLVYNRGAAFSFLAMAGGWQRWAFTALGVAAAVLICYLLKRHGTQKMFCTALALIMGGAIGNVIDRLLYGHVIDFLDFHVGAWHWPAFNLADSAITIGAALLVFDELRRVRGAR</sequence>
<dbReference type="EC" id="3.4.23.36" evidence="1"/>
<dbReference type="EMBL" id="CP001043">
    <property type="protein sequence ID" value="ACC69764.1"/>
    <property type="molecule type" value="Genomic_DNA"/>
</dbReference>
<dbReference type="RefSeq" id="WP_012399987.1">
    <property type="nucleotide sequence ID" value="NC_010622.1"/>
</dbReference>
<dbReference type="SMR" id="B2JDY8"/>
<dbReference type="STRING" id="391038.Bphy_0573"/>
<dbReference type="KEGG" id="bph:Bphy_0573"/>
<dbReference type="eggNOG" id="COG0597">
    <property type="taxonomic scope" value="Bacteria"/>
</dbReference>
<dbReference type="HOGENOM" id="CLU_083252_4_0_4"/>
<dbReference type="OrthoDB" id="9810259at2"/>
<dbReference type="UniPathway" id="UPA00665"/>
<dbReference type="Proteomes" id="UP000001192">
    <property type="component" value="Chromosome 1"/>
</dbReference>
<dbReference type="GO" id="GO:0005886">
    <property type="term" value="C:plasma membrane"/>
    <property type="evidence" value="ECO:0007669"/>
    <property type="project" value="UniProtKB-SubCell"/>
</dbReference>
<dbReference type="GO" id="GO:0004190">
    <property type="term" value="F:aspartic-type endopeptidase activity"/>
    <property type="evidence" value="ECO:0007669"/>
    <property type="project" value="UniProtKB-UniRule"/>
</dbReference>
<dbReference type="GO" id="GO:0006508">
    <property type="term" value="P:proteolysis"/>
    <property type="evidence" value="ECO:0007669"/>
    <property type="project" value="UniProtKB-KW"/>
</dbReference>
<dbReference type="HAMAP" id="MF_00161">
    <property type="entry name" value="LspA"/>
    <property type="match status" value="1"/>
</dbReference>
<dbReference type="InterPro" id="IPR001872">
    <property type="entry name" value="Peptidase_A8"/>
</dbReference>
<dbReference type="NCBIfam" id="TIGR00077">
    <property type="entry name" value="lspA"/>
    <property type="match status" value="1"/>
</dbReference>
<dbReference type="PANTHER" id="PTHR33695">
    <property type="entry name" value="LIPOPROTEIN SIGNAL PEPTIDASE"/>
    <property type="match status" value="1"/>
</dbReference>
<dbReference type="PANTHER" id="PTHR33695:SF1">
    <property type="entry name" value="LIPOPROTEIN SIGNAL PEPTIDASE"/>
    <property type="match status" value="1"/>
</dbReference>
<dbReference type="Pfam" id="PF01252">
    <property type="entry name" value="Peptidase_A8"/>
    <property type="match status" value="1"/>
</dbReference>
<dbReference type="PRINTS" id="PR00781">
    <property type="entry name" value="LIPOSIGPTASE"/>
</dbReference>
<dbReference type="PROSITE" id="PS00855">
    <property type="entry name" value="SPASE_II"/>
    <property type="match status" value="1"/>
</dbReference>
<evidence type="ECO:0000255" key="1">
    <source>
        <dbReference type="HAMAP-Rule" id="MF_00161"/>
    </source>
</evidence>
<comment type="function">
    <text evidence="1">This protein specifically catalyzes the removal of signal peptides from prolipoproteins.</text>
</comment>
<comment type="catalytic activity">
    <reaction evidence="1">
        <text>Release of signal peptides from bacterial membrane prolipoproteins. Hydrolyzes -Xaa-Yaa-Zaa-|-(S,diacylglyceryl)Cys-, in which Xaa is hydrophobic (preferably Leu), and Yaa (Ala or Ser) and Zaa (Gly or Ala) have small, neutral side chains.</text>
        <dbReference type="EC" id="3.4.23.36"/>
    </reaction>
</comment>
<comment type="pathway">
    <text evidence="1">Protein modification; lipoprotein biosynthesis (signal peptide cleavage).</text>
</comment>
<comment type="subcellular location">
    <subcellularLocation>
        <location evidence="1">Cell inner membrane</location>
        <topology evidence="1">Multi-pass membrane protein</topology>
    </subcellularLocation>
</comment>
<comment type="similarity">
    <text evidence="1">Belongs to the peptidase A8 family.</text>
</comment>
<gene>
    <name evidence="1" type="primary">lspA</name>
    <name type="ordered locus">Bphy_0573</name>
</gene>
<keyword id="KW-0064">Aspartyl protease</keyword>
<keyword id="KW-0997">Cell inner membrane</keyword>
<keyword id="KW-1003">Cell membrane</keyword>
<keyword id="KW-0378">Hydrolase</keyword>
<keyword id="KW-0472">Membrane</keyword>
<keyword id="KW-0645">Protease</keyword>
<keyword id="KW-1185">Reference proteome</keyword>
<keyword id="KW-0812">Transmembrane</keyword>
<keyword id="KW-1133">Transmembrane helix</keyword>
<organism>
    <name type="scientific">Paraburkholderia phymatum (strain DSM 17167 / CIP 108236 / LMG 21445 / STM815)</name>
    <name type="common">Burkholderia phymatum</name>
    <dbReference type="NCBI Taxonomy" id="391038"/>
    <lineage>
        <taxon>Bacteria</taxon>
        <taxon>Pseudomonadati</taxon>
        <taxon>Pseudomonadota</taxon>
        <taxon>Betaproteobacteria</taxon>
        <taxon>Burkholderiales</taxon>
        <taxon>Burkholderiaceae</taxon>
        <taxon>Paraburkholderia</taxon>
    </lineage>
</organism>
<reference key="1">
    <citation type="journal article" date="2014" name="Stand. Genomic Sci.">
        <title>Complete genome sequence of Burkholderia phymatum STM815(T), a broad host range and efficient nitrogen-fixing symbiont of Mimosa species.</title>
        <authorList>
            <person name="Moulin L."/>
            <person name="Klonowska A."/>
            <person name="Caroline B."/>
            <person name="Booth K."/>
            <person name="Vriezen J.A."/>
            <person name="Melkonian R."/>
            <person name="James E.K."/>
            <person name="Young J.P."/>
            <person name="Bena G."/>
            <person name="Hauser L."/>
            <person name="Land M."/>
            <person name="Kyrpides N."/>
            <person name="Bruce D."/>
            <person name="Chain P."/>
            <person name="Copeland A."/>
            <person name="Pitluck S."/>
            <person name="Woyke T."/>
            <person name="Lizotte-Waniewski M."/>
            <person name="Bristow J."/>
            <person name="Riley M."/>
        </authorList>
    </citation>
    <scope>NUCLEOTIDE SEQUENCE [LARGE SCALE GENOMIC DNA]</scope>
    <source>
        <strain>DSM 17167 / CIP 108236 / LMG 21445 / STM815</strain>
    </source>
</reference>
<accession>B2JDY8</accession>
<protein>
    <recommendedName>
        <fullName evidence="1">Lipoprotein signal peptidase</fullName>
        <ecNumber evidence="1">3.4.23.36</ecNumber>
    </recommendedName>
    <alternativeName>
        <fullName evidence="1">Prolipoprotein signal peptidase</fullName>
    </alternativeName>
    <alternativeName>
        <fullName evidence="1">Signal peptidase II</fullName>
        <shortName evidence="1">SPase II</shortName>
    </alternativeName>
</protein>
<feature type="chain" id="PRO_1000097239" description="Lipoprotein signal peptidase">
    <location>
        <begin position="1"/>
        <end position="166"/>
    </location>
</feature>
<feature type="transmembrane region" description="Helical" evidence="1">
    <location>
        <begin position="9"/>
        <end position="29"/>
    </location>
</feature>
<feature type="transmembrane region" description="Helical" evidence="1">
    <location>
        <begin position="37"/>
        <end position="57"/>
    </location>
</feature>
<feature type="transmembrane region" description="Helical" evidence="1">
    <location>
        <begin position="71"/>
        <end position="91"/>
    </location>
</feature>
<feature type="transmembrane region" description="Helical" evidence="1">
    <location>
        <begin position="100"/>
        <end position="120"/>
    </location>
</feature>
<feature type="transmembrane region" description="Helical" evidence="1">
    <location>
        <begin position="136"/>
        <end position="156"/>
    </location>
</feature>
<feature type="active site" evidence="1">
    <location>
        <position position="126"/>
    </location>
</feature>
<feature type="active site" evidence="1">
    <location>
        <position position="144"/>
    </location>
</feature>
<name>LSPA_PARP8</name>